<feature type="signal peptide" evidence="1">
    <location>
        <begin position="1"/>
        <end position="43"/>
    </location>
</feature>
<feature type="chain" id="PRO_0000008000" description="Bifunctional xylanase/deacetylase">
    <location>
        <begin position="44"/>
        <end position="644"/>
    </location>
</feature>
<feature type="domain" description="GH11" evidence="3">
    <location>
        <begin position="44"/>
        <end position="229"/>
    </location>
</feature>
<feature type="domain" description="CBM2 1" evidence="4">
    <location>
        <begin position="242"/>
        <end position="333"/>
    </location>
</feature>
<feature type="domain" description="NodB homology" evidence="2">
    <location>
        <begin position="356"/>
        <end position="532"/>
    </location>
</feature>
<feature type="domain" description="CBM2 2" evidence="4">
    <location>
        <begin position="553"/>
        <end position="644"/>
    </location>
</feature>
<feature type="region of interest" description="Disordered" evidence="7">
    <location>
        <begin position="222"/>
        <end position="249"/>
    </location>
</feature>
<feature type="region of interest" description="Linker ('hinge') (Gly-rich box)">
    <location>
        <begin position="231"/>
        <end position="245"/>
    </location>
</feature>
<feature type="region of interest" description="Disordered" evidence="7">
    <location>
        <begin position="327"/>
        <end position="351"/>
    </location>
</feature>
<feature type="region of interest" description="Linker ('hinge') (Pro-Thr box)">
    <location>
        <begin position="337"/>
        <end position="350"/>
    </location>
</feature>
<feature type="region of interest" description="Disordered" evidence="7">
    <location>
        <begin position="536"/>
        <end position="560"/>
    </location>
</feature>
<feature type="region of interest" description="Linker ('hinge') (Gly-rich box)">
    <location>
        <begin position="548"/>
        <end position="556"/>
    </location>
</feature>
<feature type="compositionally biased region" description="Gly residues" evidence="7">
    <location>
        <begin position="231"/>
        <end position="247"/>
    </location>
</feature>
<feature type="compositionally biased region" description="Gly residues" evidence="7">
    <location>
        <begin position="547"/>
        <end position="558"/>
    </location>
</feature>
<feature type="active site" description="Nucleophile" evidence="5">
    <location>
        <position position="126"/>
    </location>
</feature>
<feature type="active site" description="Proton donor" evidence="6">
    <location>
        <position position="216"/>
    </location>
</feature>
<feature type="strand" evidence="10">
    <location>
        <begin position="250"/>
        <end position="252"/>
    </location>
</feature>
<feature type="strand" evidence="10">
    <location>
        <begin position="255"/>
        <end position="258"/>
    </location>
</feature>
<feature type="strand" evidence="9">
    <location>
        <begin position="260"/>
        <end position="268"/>
    </location>
</feature>
<feature type="strand" evidence="9">
    <location>
        <begin position="278"/>
        <end position="280"/>
    </location>
</feature>
<feature type="strand" evidence="9">
    <location>
        <begin position="287"/>
        <end position="293"/>
    </location>
</feature>
<feature type="strand" evidence="9">
    <location>
        <begin position="296"/>
        <end position="300"/>
    </location>
</feature>
<feature type="strand" evidence="10">
    <location>
        <begin position="302"/>
        <end position="304"/>
    </location>
</feature>
<feature type="strand" evidence="9">
    <location>
        <begin position="311"/>
        <end position="318"/>
    </location>
</feature>
<feature type="strand" evidence="9">
    <location>
        <begin position="327"/>
        <end position="329"/>
    </location>
</feature>
<feature type="strand" evidence="12">
    <location>
        <begin position="562"/>
        <end position="565"/>
    </location>
</feature>
<feature type="strand" evidence="11">
    <location>
        <begin position="571"/>
        <end position="579"/>
    </location>
</feature>
<feature type="strand" evidence="11">
    <location>
        <begin position="589"/>
        <end position="591"/>
    </location>
</feature>
<feature type="strand" evidence="11">
    <location>
        <begin position="601"/>
        <end position="607"/>
    </location>
</feature>
<feature type="strand" evidence="11">
    <location>
        <begin position="609"/>
        <end position="616"/>
    </location>
</feature>
<feature type="strand" evidence="11">
    <location>
        <begin position="618"/>
        <end position="620"/>
    </location>
</feature>
<feature type="strand" evidence="11">
    <location>
        <begin position="622"/>
        <end position="629"/>
    </location>
</feature>
<proteinExistence type="evidence at protein level"/>
<keyword id="KW-0002">3D-structure</keyword>
<keyword id="KW-0119">Carbohydrate metabolism</keyword>
<keyword id="KW-0326">Glycosidase</keyword>
<keyword id="KW-0378">Hydrolase</keyword>
<keyword id="KW-0511">Multifunctional enzyme</keyword>
<keyword id="KW-0624">Polysaccharide degradation</keyword>
<keyword id="KW-0677">Repeat</keyword>
<keyword id="KW-0732">Signal</keyword>
<keyword id="KW-0858">Xylan degradation</keyword>
<protein>
    <recommendedName>
        <fullName>Bifunctional xylanase/deacetylase</fullName>
    </recommendedName>
    <domain>
        <recommendedName>
            <fullName>Endo-1,4-beta-xylanase D</fullName>
            <shortName>XYLD</shortName>
            <shortName>Xylanase D</shortName>
            <ecNumber>3.2.1.8</ecNumber>
        </recommendedName>
    </domain>
    <domain>
        <recommendedName>
            <fullName>Acetylated xylan deacetylase</fullName>
            <ecNumber>3.5.1.-</ecNumber>
        </recommendedName>
    </domain>
</protein>
<reference key="1">
    <citation type="journal article" date="1994" name="Mol. Microbiol.">
        <title>Evidence for a general role for high-affinity non-catalytic cellulose binding domains in microbial plant cell wall hydrolases.</title>
        <authorList>
            <person name="Millward-Sadler S.J."/>
            <person name="Poole D.M."/>
            <person name="Henrissat B."/>
            <person name="Hazlewood G.P."/>
            <person name="Clarke J.H."/>
            <person name="Gilbert H.J."/>
        </authorList>
    </citation>
    <scope>NUCLEOTIDE SEQUENCE [GENOMIC DNA]</scope>
    <source>
        <strain>221</strain>
    </source>
</reference>
<organism>
    <name type="scientific">Cellulomonas fimi</name>
    <dbReference type="NCBI Taxonomy" id="1708"/>
    <lineage>
        <taxon>Bacteria</taxon>
        <taxon>Bacillati</taxon>
        <taxon>Actinomycetota</taxon>
        <taxon>Actinomycetes</taxon>
        <taxon>Micrococcales</taxon>
        <taxon>Cellulomonadaceae</taxon>
        <taxon>Cellulomonas</taxon>
    </lineage>
</organism>
<sequence>MSDSFEATRTTRRRRPLQALTGLLAAGALVAGALAAASPAAAAVTSNTTGTHDGYFYSFWTDSPGSVSMDLNSGGGYTRWSNTGNFVAGKGWSTGGRKTVSYSGQFNPSRNAYLTLYGWTQSPLVEYYIVDSWGTYRPTGTFMGTVTSDGGTYDIYRTQRVNKPSIEGDSSTFYQYWSVRQQKRTGGTITSGNHFDAWASKGMNLGRHNYMIMATEGYQSSGSSSITVSEGSGGGGGGDTGGGGGSTGCSVTATRAEEWSDRFNVTYSVSGSSAWTVNLALNGSQTIQASWNANVTGSGSTRTVTPNGSGNTFGVTVMKNGSSTTPAATCAGSGGGTATPTPTPTPTPTPQSCSAGYVGLTFDDGPNTGTTNQILSTLTQYGATATVFPTGQNAQGNPSLMQAYKNAGVQIGNHSWDHPHLVNMSQSDMQSQLTRTQQAIQQTAGVTPTLFRPPYGESNATLRQVESSLGLREIIWDVDSQDWNNASASQIRQAASRLTNGQIILMHDWPAATVQALPGILQDLRSRNLCTGHISSSTGRAVAPSSAGGGGGGGGGTGSCSVSAVRGEEWADRFNVTYSVSGSSSWVVTLGLNGGQSVQSSWNAALTGSSGTVTARPNGSGNSFGVTFYKNGSSATPGATCATG</sequence>
<accession>P54865</accession>
<gene>
    <name type="primary">xynD</name>
</gene>
<comment type="function">
    <text>Endo-acting xylanase which displays no detectable activity against polysaccharides other than xylan. Hydrolyzes glucosidic bonds with retention of anomeric configuration.</text>
</comment>
<comment type="catalytic activity">
    <reaction>
        <text>Endohydrolysis of (1-&gt;4)-beta-D-xylosidic linkages in xylans.</text>
        <dbReference type="EC" id="3.2.1.8"/>
    </reaction>
</comment>
<comment type="pathway">
    <text>Glycan degradation; xylan degradation.</text>
</comment>
<comment type="similarity">
    <text evidence="8">Belongs to the glycosyl hydrolase 11 (cellulase G) family.</text>
</comment>
<dbReference type="EC" id="3.2.1.8"/>
<dbReference type="EC" id="3.5.1.-"/>
<dbReference type="EMBL" id="X76729">
    <property type="protein sequence ID" value="CAA54145.1"/>
    <property type="molecule type" value="Genomic_DNA"/>
</dbReference>
<dbReference type="PIR" id="I40712">
    <property type="entry name" value="I40712"/>
</dbReference>
<dbReference type="PDB" id="1E5B">
    <property type="method" value="NMR"/>
    <property type="chains" value="A=247-333"/>
</dbReference>
<dbReference type="PDB" id="1E5C">
    <property type="method" value="NMR"/>
    <property type="chains" value="A=247-333"/>
</dbReference>
<dbReference type="PDB" id="1HEH">
    <property type="method" value="NMR"/>
    <property type="chains" value="C=557-644"/>
</dbReference>
<dbReference type="PDB" id="1HEJ">
    <property type="method" value="NMR"/>
    <property type="chains" value="C=557-644"/>
</dbReference>
<dbReference type="PDB" id="1XBD">
    <property type="method" value="NMR"/>
    <property type="chains" value="A=247-333"/>
</dbReference>
<dbReference type="PDB" id="2XBD">
    <property type="method" value="NMR"/>
    <property type="chains" value="A=247-333"/>
</dbReference>
<dbReference type="PDBsum" id="1E5B"/>
<dbReference type="PDBsum" id="1E5C"/>
<dbReference type="PDBsum" id="1HEH"/>
<dbReference type="PDBsum" id="1HEJ"/>
<dbReference type="PDBsum" id="1XBD"/>
<dbReference type="PDBsum" id="2XBD"/>
<dbReference type="SMR" id="P54865"/>
<dbReference type="CAZy" id="CBM2">
    <property type="family name" value="Carbohydrate-Binding Module Family 2"/>
</dbReference>
<dbReference type="CAZy" id="GH11">
    <property type="family name" value="Glycoside Hydrolase Family 11"/>
</dbReference>
<dbReference type="BRENDA" id="3.2.1.8">
    <property type="organism ID" value="1233"/>
</dbReference>
<dbReference type="UniPathway" id="UPA00114"/>
<dbReference type="EvolutionaryTrace" id="P54865"/>
<dbReference type="GO" id="GO:0031176">
    <property type="term" value="F:endo-1,4-beta-xylanase activity"/>
    <property type="evidence" value="ECO:0007669"/>
    <property type="project" value="UniProtKB-EC"/>
</dbReference>
<dbReference type="GO" id="GO:0016810">
    <property type="term" value="F:hydrolase activity, acting on carbon-nitrogen (but not peptide) bonds"/>
    <property type="evidence" value="ECO:0007669"/>
    <property type="project" value="InterPro"/>
</dbReference>
<dbReference type="GO" id="GO:0030247">
    <property type="term" value="F:polysaccharide binding"/>
    <property type="evidence" value="ECO:0007669"/>
    <property type="project" value="InterPro"/>
</dbReference>
<dbReference type="GO" id="GO:0045493">
    <property type="term" value="P:xylan catabolic process"/>
    <property type="evidence" value="ECO:0007669"/>
    <property type="project" value="UniProtKB-UniPathway"/>
</dbReference>
<dbReference type="CDD" id="cd10953">
    <property type="entry name" value="CE4_SlAXE_like"/>
    <property type="match status" value="1"/>
</dbReference>
<dbReference type="FunFam" id="2.60.120.180:FF:000001">
    <property type="entry name" value="Endo-1,4-beta-xylanase"/>
    <property type="match status" value="1"/>
</dbReference>
<dbReference type="Gene3D" id="2.60.120.180">
    <property type="match status" value="1"/>
</dbReference>
<dbReference type="Gene3D" id="2.60.40.290">
    <property type="match status" value="2"/>
</dbReference>
<dbReference type="Gene3D" id="3.20.20.370">
    <property type="entry name" value="Glycoside hydrolase/deacetylase"/>
    <property type="match status" value="1"/>
</dbReference>
<dbReference type="InterPro" id="IPR001919">
    <property type="entry name" value="CBD2"/>
</dbReference>
<dbReference type="InterPro" id="IPR008965">
    <property type="entry name" value="CBM2/CBM3_carb-bd_dom_sf"/>
</dbReference>
<dbReference type="InterPro" id="IPR012291">
    <property type="entry name" value="CBM2_carb-bd_dom_sf"/>
</dbReference>
<dbReference type="InterPro" id="IPR013320">
    <property type="entry name" value="ConA-like_dom_sf"/>
</dbReference>
<dbReference type="InterPro" id="IPR013319">
    <property type="entry name" value="GH11/12"/>
</dbReference>
<dbReference type="InterPro" id="IPR018208">
    <property type="entry name" value="GH11_AS_1"/>
</dbReference>
<dbReference type="InterPro" id="IPR033119">
    <property type="entry name" value="GH11_AS_2"/>
</dbReference>
<dbReference type="InterPro" id="IPR033123">
    <property type="entry name" value="GH11_dom"/>
</dbReference>
<dbReference type="InterPro" id="IPR011330">
    <property type="entry name" value="Glyco_hydro/deAcase_b/a-brl"/>
</dbReference>
<dbReference type="InterPro" id="IPR001137">
    <property type="entry name" value="Glyco_hydro_11"/>
</dbReference>
<dbReference type="InterPro" id="IPR002509">
    <property type="entry name" value="NODB_dom"/>
</dbReference>
<dbReference type="InterPro" id="IPR006311">
    <property type="entry name" value="TAT_signal"/>
</dbReference>
<dbReference type="PANTHER" id="PTHR46828">
    <property type="entry name" value="ENDO-1,4-BETA-XYLANASE A-RELATED"/>
    <property type="match status" value="1"/>
</dbReference>
<dbReference type="PANTHER" id="PTHR46828:SF2">
    <property type="entry name" value="ENDO-1,4-BETA-XYLANASE A-RELATED"/>
    <property type="match status" value="1"/>
</dbReference>
<dbReference type="Pfam" id="PF00457">
    <property type="entry name" value="Glyco_hydro_11"/>
    <property type="match status" value="1"/>
</dbReference>
<dbReference type="Pfam" id="PF01522">
    <property type="entry name" value="Polysacc_deac_1"/>
    <property type="match status" value="1"/>
</dbReference>
<dbReference type="PRINTS" id="PR00911">
    <property type="entry name" value="GLHYDRLASE11"/>
</dbReference>
<dbReference type="SMART" id="SM00637">
    <property type="entry name" value="CBD_II"/>
    <property type="match status" value="2"/>
</dbReference>
<dbReference type="SUPFAM" id="SSF49384">
    <property type="entry name" value="Carbohydrate-binding domain"/>
    <property type="match status" value="2"/>
</dbReference>
<dbReference type="SUPFAM" id="SSF49899">
    <property type="entry name" value="Concanavalin A-like lectins/glucanases"/>
    <property type="match status" value="1"/>
</dbReference>
<dbReference type="SUPFAM" id="SSF88713">
    <property type="entry name" value="Glycoside hydrolase/deacetylase"/>
    <property type="match status" value="1"/>
</dbReference>
<dbReference type="PROSITE" id="PS51173">
    <property type="entry name" value="CBM2"/>
    <property type="match status" value="2"/>
</dbReference>
<dbReference type="PROSITE" id="PS00776">
    <property type="entry name" value="GH11_1"/>
    <property type="match status" value="1"/>
</dbReference>
<dbReference type="PROSITE" id="PS00777">
    <property type="entry name" value="GH11_2"/>
    <property type="match status" value="1"/>
</dbReference>
<dbReference type="PROSITE" id="PS51761">
    <property type="entry name" value="GH11_3"/>
    <property type="match status" value="1"/>
</dbReference>
<dbReference type="PROSITE" id="PS51677">
    <property type="entry name" value="NODB"/>
    <property type="match status" value="1"/>
</dbReference>
<dbReference type="PROSITE" id="PS51318">
    <property type="entry name" value="TAT"/>
    <property type="match status" value="1"/>
</dbReference>
<evidence type="ECO:0000255" key="1"/>
<evidence type="ECO:0000255" key="2">
    <source>
        <dbReference type="PROSITE-ProRule" id="PRU01014"/>
    </source>
</evidence>
<evidence type="ECO:0000255" key="3">
    <source>
        <dbReference type="PROSITE-ProRule" id="PRU01097"/>
    </source>
</evidence>
<evidence type="ECO:0000255" key="4">
    <source>
        <dbReference type="PROSITE-ProRule" id="PRU01135"/>
    </source>
</evidence>
<evidence type="ECO:0000255" key="5">
    <source>
        <dbReference type="PROSITE-ProRule" id="PRU10062"/>
    </source>
</evidence>
<evidence type="ECO:0000255" key="6">
    <source>
        <dbReference type="PROSITE-ProRule" id="PRU10063"/>
    </source>
</evidence>
<evidence type="ECO:0000256" key="7">
    <source>
        <dbReference type="SAM" id="MobiDB-lite"/>
    </source>
</evidence>
<evidence type="ECO:0000305" key="8"/>
<evidence type="ECO:0007829" key="9">
    <source>
        <dbReference type="PDB" id="1E5B"/>
    </source>
</evidence>
<evidence type="ECO:0007829" key="10">
    <source>
        <dbReference type="PDB" id="1E5C"/>
    </source>
</evidence>
<evidence type="ECO:0007829" key="11">
    <source>
        <dbReference type="PDB" id="1HEH"/>
    </source>
</evidence>
<evidence type="ECO:0007829" key="12">
    <source>
        <dbReference type="PDB" id="1HEJ"/>
    </source>
</evidence>
<name>XYND_CELFI</name>